<comment type="function">
    <text>May contribute to the transparency and refractive index of the lens.</text>
</comment>
<comment type="subunit">
    <text evidence="2">Heteromer composed of three CRYAA and one CRYAB subunits. Aggregates with homologous proteins, including the small heat shock protein HSPB1, to form large heteromeric complexes. Inter-subunit bridging via zinc ions enhances stability, which is crucial as there is no protein turn over in the lens.</text>
</comment>
<comment type="tissue specificity">
    <text>Lens as well as other tissues.</text>
</comment>
<comment type="similarity">
    <text evidence="3">Belongs to the small heat shock protein (HSP20) family.</text>
</comment>
<feature type="chain" id="PRO_0000125917" description="Alpha-crystallin B chain">
    <location>
        <begin position="1"/>
        <end position="174"/>
    </location>
</feature>
<feature type="domain" description="sHSP" evidence="3">
    <location>
        <begin position="55"/>
        <end position="163"/>
    </location>
</feature>
<feature type="region of interest" description="Disordered" evidence="4">
    <location>
        <begin position="148"/>
        <end position="174"/>
    </location>
</feature>
<feature type="compositionally biased region" description="Basic and acidic residues" evidence="4">
    <location>
        <begin position="149"/>
        <end position="166"/>
    </location>
</feature>
<feature type="binding site" evidence="1">
    <location>
        <position position="82"/>
    </location>
    <ligand>
        <name>Zn(2+)</name>
        <dbReference type="ChEBI" id="CHEBI:29105"/>
        <label>1</label>
    </ligand>
</feature>
<feature type="binding site" evidence="1">
    <location>
        <position position="103"/>
    </location>
    <ligand>
        <name>Zn(2+)</name>
        <dbReference type="ChEBI" id="CHEBI:29105"/>
        <label>2</label>
    </ligand>
</feature>
<feature type="binding site" evidence="1">
    <location>
        <position position="105"/>
    </location>
    <ligand>
        <name>Zn(2+)</name>
        <dbReference type="ChEBI" id="CHEBI:29105"/>
        <label>2</label>
    </ligand>
</feature>
<feature type="binding site" evidence="1">
    <location>
        <position position="110"/>
    </location>
    <ligand>
        <name>Zn(2+)</name>
        <dbReference type="ChEBI" id="CHEBI:29105"/>
        <label>1</label>
    </ligand>
</feature>
<feature type="modified residue" description="N-acetylmethionine" evidence="1">
    <location>
        <position position="1"/>
    </location>
</feature>
<feature type="sequence conflict" description="In Ref. 1; AAB25041." evidence="5" ref="1">
    <original>I</original>
    <variation>V</variation>
    <location>
        <position position="10"/>
    </location>
</feature>
<dbReference type="EMBL" id="S53164">
    <property type="protein sequence ID" value="AAB25041.1"/>
    <property type="molecule type" value="mRNA"/>
</dbReference>
<dbReference type="EMBL" id="U26661">
    <property type="protein sequence ID" value="AAB53019.1"/>
    <property type="molecule type" value="mRNA"/>
</dbReference>
<dbReference type="PIR" id="A49181">
    <property type="entry name" value="A49181"/>
</dbReference>
<dbReference type="RefSeq" id="NP_990507.2">
    <property type="nucleotide sequence ID" value="NM_205176.2"/>
</dbReference>
<dbReference type="SMR" id="Q05713"/>
<dbReference type="FunCoup" id="Q05713">
    <property type="interactions" value="1330"/>
</dbReference>
<dbReference type="STRING" id="9031.ENSGALP00000012892"/>
<dbReference type="PaxDb" id="9031-ENSGALP00000012892"/>
<dbReference type="Ensembl" id="ENSGALT00010061460.1">
    <property type="protein sequence ID" value="ENSGALP00010037973.1"/>
    <property type="gene ID" value="ENSGALG00010025192.1"/>
</dbReference>
<dbReference type="GeneID" id="396089"/>
<dbReference type="KEGG" id="gga:396089"/>
<dbReference type="CTD" id="1410"/>
<dbReference type="VEuPathDB" id="HostDB:geneid_396089"/>
<dbReference type="eggNOG" id="KOG3591">
    <property type="taxonomic scope" value="Eukaryota"/>
</dbReference>
<dbReference type="GeneTree" id="ENSGT00940000157434"/>
<dbReference type="HOGENOM" id="CLU_095001_2_0_1"/>
<dbReference type="InParanoid" id="Q05713"/>
<dbReference type="OMA" id="FRDWWED"/>
<dbReference type="OrthoDB" id="1431247at2759"/>
<dbReference type="PhylomeDB" id="Q05713"/>
<dbReference type="TreeFam" id="TF105049"/>
<dbReference type="Reactome" id="R-GGA-3371571">
    <property type="pathway name" value="HSF1-dependent transactivation"/>
</dbReference>
<dbReference type="PRO" id="PR:Q05713"/>
<dbReference type="Proteomes" id="UP000000539">
    <property type="component" value="Chromosome 24"/>
</dbReference>
<dbReference type="Bgee" id="ENSGALG00000007945">
    <property type="expression patterns" value="Expressed in muscle tissue and 9 other cell types or tissues"/>
</dbReference>
<dbReference type="GO" id="GO:0005737">
    <property type="term" value="C:cytoplasm"/>
    <property type="evidence" value="ECO:0000318"/>
    <property type="project" value="GO_Central"/>
</dbReference>
<dbReference type="GO" id="GO:0005829">
    <property type="term" value="C:cytosol"/>
    <property type="evidence" value="ECO:0007669"/>
    <property type="project" value="Ensembl"/>
</dbReference>
<dbReference type="GO" id="GO:0005739">
    <property type="term" value="C:mitochondrion"/>
    <property type="evidence" value="ECO:0007669"/>
    <property type="project" value="Ensembl"/>
</dbReference>
<dbReference type="GO" id="GO:0005634">
    <property type="term" value="C:nucleus"/>
    <property type="evidence" value="ECO:0000318"/>
    <property type="project" value="GO_Central"/>
</dbReference>
<dbReference type="GO" id="GO:0005886">
    <property type="term" value="C:plasma membrane"/>
    <property type="evidence" value="ECO:0007669"/>
    <property type="project" value="Ensembl"/>
</dbReference>
<dbReference type="GO" id="GO:0032991">
    <property type="term" value="C:protein-containing complex"/>
    <property type="evidence" value="ECO:0007669"/>
    <property type="project" value="Ensembl"/>
</dbReference>
<dbReference type="GO" id="GO:0030018">
    <property type="term" value="C:Z disc"/>
    <property type="evidence" value="ECO:0007669"/>
    <property type="project" value="Ensembl"/>
</dbReference>
<dbReference type="GO" id="GO:0001540">
    <property type="term" value="F:amyloid-beta binding"/>
    <property type="evidence" value="ECO:0007669"/>
    <property type="project" value="Ensembl"/>
</dbReference>
<dbReference type="GO" id="GO:0046872">
    <property type="term" value="F:metal ion binding"/>
    <property type="evidence" value="ECO:0007669"/>
    <property type="project" value="UniProtKB-KW"/>
</dbReference>
<dbReference type="GO" id="GO:0042803">
    <property type="term" value="F:protein homodimerization activity"/>
    <property type="evidence" value="ECO:0000250"/>
    <property type="project" value="UniProtKB"/>
</dbReference>
<dbReference type="GO" id="GO:0044877">
    <property type="term" value="F:protein-containing complex binding"/>
    <property type="evidence" value="ECO:0007669"/>
    <property type="project" value="Ensembl"/>
</dbReference>
<dbReference type="GO" id="GO:0005212">
    <property type="term" value="F:structural constituent of eye lens"/>
    <property type="evidence" value="ECO:0007669"/>
    <property type="project" value="UniProtKB-KW"/>
</dbReference>
<dbReference type="GO" id="GO:0051082">
    <property type="term" value="F:unfolded protein binding"/>
    <property type="evidence" value="ECO:0000318"/>
    <property type="project" value="GO_Central"/>
</dbReference>
<dbReference type="GO" id="GO:0060561">
    <property type="term" value="P:apoptotic process involved in morphogenesis"/>
    <property type="evidence" value="ECO:0007669"/>
    <property type="project" value="Ensembl"/>
</dbReference>
<dbReference type="GO" id="GO:0071480">
    <property type="term" value="P:cellular response to gamma radiation"/>
    <property type="evidence" value="ECO:0007669"/>
    <property type="project" value="Ensembl"/>
</dbReference>
<dbReference type="GO" id="GO:0002088">
    <property type="term" value="P:lens development in camera-type eye"/>
    <property type="evidence" value="ECO:0007669"/>
    <property type="project" value="Ensembl"/>
</dbReference>
<dbReference type="GO" id="GO:0007517">
    <property type="term" value="P:muscle organ development"/>
    <property type="evidence" value="ECO:0007669"/>
    <property type="project" value="Ensembl"/>
</dbReference>
<dbReference type="GO" id="GO:1905907">
    <property type="term" value="P:negative regulation of amyloid fibril formation"/>
    <property type="evidence" value="ECO:0007669"/>
    <property type="project" value="Ensembl"/>
</dbReference>
<dbReference type="GO" id="GO:0043066">
    <property type="term" value="P:negative regulation of apoptotic process"/>
    <property type="evidence" value="ECO:0000318"/>
    <property type="project" value="GO_Central"/>
</dbReference>
<dbReference type="GO" id="GO:0045892">
    <property type="term" value="P:negative regulation of DNA-templated transcription"/>
    <property type="evidence" value="ECO:0007669"/>
    <property type="project" value="Ensembl"/>
</dbReference>
<dbReference type="GO" id="GO:0010629">
    <property type="term" value="P:negative regulation of gene expression"/>
    <property type="evidence" value="ECO:0007669"/>
    <property type="project" value="Ensembl"/>
</dbReference>
<dbReference type="GO" id="GO:0032387">
    <property type="term" value="P:negative regulation of intracellular transport"/>
    <property type="evidence" value="ECO:0007669"/>
    <property type="project" value="Ensembl"/>
</dbReference>
<dbReference type="GO" id="GO:0031333">
    <property type="term" value="P:negative regulation of protein-containing complex assembly"/>
    <property type="evidence" value="ECO:0007669"/>
    <property type="project" value="Ensembl"/>
</dbReference>
<dbReference type="GO" id="GO:0042026">
    <property type="term" value="P:protein refolding"/>
    <property type="evidence" value="ECO:0000318"/>
    <property type="project" value="GO_Central"/>
</dbReference>
<dbReference type="GO" id="GO:0050821">
    <property type="term" value="P:protein stabilization"/>
    <property type="evidence" value="ECO:0007669"/>
    <property type="project" value="Ensembl"/>
</dbReference>
<dbReference type="GO" id="GO:0009408">
    <property type="term" value="P:response to heat"/>
    <property type="evidence" value="ECO:0000318"/>
    <property type="project" value="GO_Central"/>
</dbReference>
<dbReference type="GO" id="GO:0042542">
    <property type="term" value="P:response to hydrogen peroxide"/>
    <property type="evidence" value="ECO:0007669"/>
    <property type="project" value="Ensembl"/>
</dbReference>
<dbReference type="GO" id="GO:0001666">
    <property type="term" value="P:response to hypoxia"/>
    <property type="evidence" value="ECO:0007669"/>
    <property type="project" value="Ensembl"/>
</dbReference>
<dbReference type="GO" id="GO:0007021">
    <property type="term" value="P:tubulin complex assembly"/>
    <property type="evidence" value="ECO:0007669"/>
    <property type="project" value="Ensembl"/>
</dbReference>
<dbReference type="FunFam" id="2.60.40.790:FF:000011">
    <property type="entry name" value="Alpha-crystallin B chain"/>
    <property type="match status" value="1"/>
</dbReference>
<dbReference type="Gene3D" id="2.60.40.790">
    <property type="match status" value="1"/>
</dbReference>
<dbReference type="InterPro" id="IPR002068">
    <property type="entry name" value="A-crystallin/Hsp20_dom"/>
</dbReference>
<dbReference type="InterPro" id="IPR055269">
    <property type="entry name" value="Alpha-crystallin/HSP_16"/>
</dbReference>
<dbReference type="InterPro" id="IPR001436">
    <property type="entry name" value="Alpha-crystallin/sHSP_animal"/>
</dbReference>
<dbReference type="InterPro" id="IPR003090">
    <property type="entry name" value="Alpha-crystallin_N"/>
</dbReference>
<dbReference type="InterPro" id="IPR008978">
    <property type="entry name" value="HSP20-like_chaperone"/>
</dbReference>
<dbReference type="PANTHER" id="PTHR45640:SF5">
    <property type="entry name" value="ALPHA-CRYSTALLIN B CHAIN"/>
    <property type="match status" value="1"/>
</dbReference>
<dbReference type="PANTHER" id="PTHR45640">
    <property type="entry name" value="HEAT SHOCK PROTEIN HSP-12.2-RELATED"/>
    <property type="match status" value="1"/>
</dbReference>
<dbReference type="Pfam" id="PF00525">
    <property type="entry name" value="Crystallin"/>
    <property type="match status" value="1"/>
</dbReference>
<dbReference type="Pfam" id="PF00011">
    <property type="entry name" value="HSP20"/>
    <property type="match status" value="1"/>
</dbReference>
<dbReference type="PIRSF" id="PIRSF036514">
    <property type="entry name" value="Sm_HSP_B1"/>
    <property type="match status" value="1"/>
</dbReference>
<dbReference type="PRINTS" id="PR00299">
    <property type="entry name" value="ACRYSTALLIN"/>
</dbReference>
<dbReference type="SUPFAM" id="SSF49764">
    <property type="entry name" value="HSP20-like chaperones"/>
    <property type="match status" value="1"/>
</dbReference>
<dbReference type="PROSITE" id="PS01031">
    <property type="entry name" value="SHSP"/>
    <property type="match status" value="1"/>
</dbReference>
<keyword id="KW-0007">Acetylation</keyword>
<keyword id="KW-0273">Eye lens protein</keyword>
<keyword id="KW-0479">Metal-binding</keyword>
<keyword id="KW-1185">Reference proteome</keyword>
<keyword id="KW-0862">Zinc</keyword>
<organism>
    <name type="scientific">Gallus gallus</name>
    <name type="common">Chicken</name>
    <dbReference type="NCBI Taxonomy" id="9031"/>
    <lineage>
        <taxon>Eukaryota</taxon>
        <taxon>Metazoa</taxon>
        <taxon>Chordata</taxon>
        <taxon>Craniata</taxon>
        <taxon>Vertebrata</taxon>
        <taxon>Euteleostomi</taxon>
        <taxon>Archelosauria</taxon>
        <taxon>Archosauria</taxon>
        <taxon>Dinosauria</taxon>
        <taxon>Saurischia</taxon>
        <taxon>Theropoda</taxon>
        <taxon>Coelurosauria</taxon>
        <taxon>Aves</taxon>
        <taxon>Neognathae</taxon>
        <taxon>Galloanserae</taxon>
        <taxon>Galliformes</taxon>
        <taxon>Phasianidae</taxon>
        <taxon>Phasianinae</taxon>
        <taxon>Gallus</taxon>
    </lineage>
</organism>
<sequence>MDITIHNPLIRRPLFSWLTPSRIFDQIFGEHLQESELLPTSPSLSPFLMRSPFFRMPSWLETGLSEMRLEKDKFSVNLDVKHFSPEELKVKVLGDMIEIHGKHEERQDEHGFIAREFSRKYRIPADVDPLTITSSLSLDGVLTVSAPRKQSDVPERSIPITREEKPAIAGSQRK</sequence>
<reference key="1">
    <citation type="journal article" date="1992" name="Exp. Eye Res.">
        <title>Crystallin gene expression in the process of lentoidogenesis in cultures of chicken lens epithelial cells.</title>
        <authorList>
            <person name="Sawada K."/>
            <person name="Agata K."/>
            <person name="Eguchi G."/>
        </authorList>
    </citation>
    <scope>NUCLEOTIDE SEQUENCE [MRNA]</scope>
    <source>
        <tissue>Lens</tissue>
    </source>
</reference>
<reference key="2">
    <citation type="journal article" date="1997" name="Gene">
        <title>Alternative transcriptional initiation and alternative use of polyadenylation signals in the alphaB-crystallin gene expressed in different chicken tissues.</title>
        <authorList>
            <person name="Macip S."/>
            <person name="Mezquita C."/>
            <person name="Mezquita J."/>
        </authorList>
    </citation>
    <scope>NUCLEOTIDE SEQUENCE [MRNA]</scope>
    <source>
        <strain>Hubbard White Mountain</strain>
        <tissue>Testis</tissue>
    </source>
</reference>
<proteinExistence type="evidence at transcript level"/>
<accession>Q05713</accession>
<accession>Q90657</accession>
<protein>
    <recommendedName>
        <fullName>Alpha-crystallin B chain</fullName>
    </recommendedName>
    <alternativeName>
        <fullName>Alpha(B)-crystallin</fullName>
    </alternativeName>
</protein>
<evidence type="ECO:0000250" key="1"/>
<evidence type="ECO:0000250" key="2">
    <source>
        <dbReference type="UniProtKB" id="P02511"/>
    </source>
</evidence>
<evidence type="ECO:0000255" key="3">
    <source>
        <dbReference type="PROSITE-ProRule" id="PRU00285"/>
    </source>
</evidence>
<evidence type="ECO:0000256" key="4">
    <source>
        <dbReference type="SAM" id="MobiDB-lite"/>
    </source>
</evidence>
<evidence type="ECO:0000305" key="5"/>
<name>CRYAB_CHICK</name>
<gene>
    <name type="primary">CRYAB</name>
</gene>